<comment type="function">
    <text evidence="1">Bidirectionally degrades single-stranded DNA into large acid-insoluble oligonucleotides, which are then degraded further into small acid-soluble oligonucleotides.</text>
</comment>
<comment type="catalytic activity">
    <reaction evidence="1">
        <text>Exonucleolytic cleavage in either 5'- to 3'- or 3'- to 5'-direction to yield nucleoside 5'-phosphates.</text>
        <dbReference type="EC" id="3.1.11.6"/>
    </reaction>
</comment>
<comment type="subunit">
    <text evidence="1">Heterooligomer composed of large and small subunits.</text>
</comment>
<comment type="subcellular location">
    <subcellularLocation>
        <location evidence="1">Cytoplasm</location>
    </subcellularLocation>
</comment>
<comment type="similarity">
    <text evidence="1">Belongs to the XseB family.</text>
</comment>
<protein>
    <recommendedName>
        <fullName evidence="1">Exodeoxyribonuclease 7 small subunit</fullName>
        <ecNumber evidence="1">3.1.11.6</ecNumber>
    </recommendedName>
    <alternativeName>
        <fullName evidence="1">Exodeoxyribonuclease VII small subunit</fullName>
        <shortName evidence="1">Exonuclease VII small subunit</shortName>
    </alternativeName>
</protein>
<organism>
    <name type="scientific">Rickettsia rickettsii (strain Sheila Smith)</name>
    <dbReference type="NCBI Taxonomy" id="392021"/>
    <lineage>
        <taxon>Bacteria</taxon>
        <taxon>Pseudomonadati</taxon>
        <taxon>Pseudomonadota</taxon>
        <taxon>Alphaproteobacteria</taxon>
        <taxon>Rickettsiales</taxon>
        <taxon>Rickettsiaceae</taxon>
        <taxon>Rickettsieae</taxon>
        <taxon>Rickettsia</taxon>
        <taxon>spotted fever group</taxon>
    </lineage>
</organism>
<sequence length="80" mass="9134">MTNTKTLEANISFEEALKELEEIVKKIDNGQESLETAVNSFERGILLKNHCEKKLKEARLKIEKITKLADSTVVLEEMEV</sequence>
<proteinExistence type="inferred from homology"/>
<feature type="chain" id="PRO_1000019592" description="Exodeoxyribonuclease 7 small subunit">
    <location>
        <begin position="1"/>
        <end position="80"/>
    </location>
</feature>
<accession>A8GRQ8</accession>
<evidence type="ECO:0000255" key="1">
    <source>
        <dbReference type="HAMAP-Rule" id="MF_00337"/>
    </source>
</evidence>
<gene>
    <name evidence="1" type="primary">xseB</name>
    <name type="ordered locus">A1G_02690</name>
</gene>
<reference key="1">
    <citation type="submission" date="2007-09" db="EMBL/GenBank/DDBJ databases">
        <title>Complete genome sequence of Rickettsia rickettsii.</title>
        <authorList>
            <person name="Madan A."/>
            <person name="Fahey J."/>
            <person name="Helton E."/>
            <person name="Ketteman M."/>
            <person name="Madan A."/>
            <person name="Rodrigues S."/>
            <person name="Sanchez A."/>
            <person name="Dasch G."/>
            <person name="Eremeeva M."/>
        </authorList>
    </citation>
    <scope>NUCLEOTIDE SEQUENCE [LARGE SCALE GENOMIC DNA]</scope>
    <source>
        <strain>Sheila Smith</strain>
    </source>
</reference>
<keyword id="KW-0963">Cytoplasm</keyword>
<keyword id="KW-0269">Exonuclease</keyword>
<keyword id="KW-0378">Hydrolase</keyword>
<keyword id="KW-0540">Nuclease</keyword>
<dbReference type="EC" id="3.1.11.6" evidence="1"/>
<dbReference type="EMBL" id="CP000848">
    <property type="protein sequence ID" value="ABV76083.1"/>
    <property type="molecule type" value="Genomic_DNA"/>
</dbReference>
<dbReference type="RefSeq" id="WP_004996011.1">
    <property type="nucleotide sequence ID" value="NC_009882.1"/>
</dbReference>
<dbReference type="SMR" id="A8GRQ8"/>
<dbReference type="GeneID" id="79937238"/>
<dbReference type="KEGG" id="rri:A1G_02690"/>
<dbReference type="HOGENOM" id="CLU_145918_0_3_5"/>
<dbReference type="Proteomes" id="UP000006832">
    <property type="component" value="Chromosome"/>
</dbReference>
<dbReference type="GO" id="GO:0005829">
    <property type="term" value="C:cytosol"/>
    <property type="evidence" value="ECO:0007669"/>
    <property type="project" value="TreeGrafter"/>
</dbReference>
<dbReference type="GO" id="GO:0009318">
    <property type="term" value="C:exodeoxyribonuclease VII complex"/>
    <property type="evidence" value="ECO:0007669"/>
    <property type="project" value="InterPro"/>
</dbReference>
<dbReference type="GO" id="GO:0008855">
    <property type="term" value="F:exodeoxyribonuclease VII activity"/>
    <property type="evidence" value="ECO:0007669"/>
    <property type="project" value="UniProtKB-UniRule"/>
</dbReference>
<dbReference type="GO" id="GO:0006308">
    <property type="term" value="P:DNA catabolic process"/>
    <property type="evidence" value="ECO:0007669"/>
    <property type="project" value="UniProtKB-UniRule"/>
</dbReference>
<dbReference type="Gene3D" id="1.10.287.1040">
    <property type="entry name" value="Exonuclease VII, small subunit"/>
    <property type="match status" value="1"/>
</dbReference>
<dbReference type="HAMAP" id="MF_00337">
    <property type="entry name" value="Exonuc_7_S"/>
    <property type="match status" value="1"/>
</dbReference>
<dbReference type="InterPro" id="IPR003761">
    <property type="entry name" value="Exonuc_VII_S"/>
</dbReference>
<dbReference type="InterPro" id="IPR037004">
    <property type="entry name" value="Exonuc_VII_ssu_sf"/>
</dbReference>
<dbReference type="NCBIfam" id="NF002139">
    <property type="entry name" value="PRK00977.1-3"/>
    <property type="match status" value="1"/>
</dbReference>
<dbReference type="NCBIfam" id="NF002140">
    <property type="entry name" value="PRK00977.1-4"/>
    <property type="match status" value="1"/>
</dbReference>
<dbReference type="NCBIfam" id="TIGR01280">
    <property type="entry name" value="xseB"/>
    <property type="match status" value="1"/>
</dbReference>
<dbReference type="PANTHER" id="PTHR34137">
    <property type="entry name" value="EXODEOXYRIBONUCLEASE 7 SMALL SUBUNIT"/>
    <property type="match status" value="1"/>
</dbReference>
<dbReference type="PANTHER" id="PTHR34137:SF1">
    <property type="entry name" value="EXODEOXYRIBONUCLEASE 7 SMALL SUBUNIT"/>
    <property type="match status" value="1"/>
</dbReference>
<dbReference type="Pfam" id="PF02609">
    <property type="entry name" value="Exonuc_VII_S"/>
    <property type="match status" value="1"/>
</dbReference>
<dbReference type="PIRSF" id="PIRSF006488">
    <property type="entry name" value="Exonuc_VII_S"/>
    <property type="match status" value="1"/>
</dbReference>
<dbReference type="SUPFAM" id="SSF116842">
    <property type="entry name" value="XseB-like"/>
    <property type="match status" value="1"/>
</dbReference>
<name>EX7S_RICRS</name>